<name>QUEA_KLEP3</name>
<gene>
    <name evidence="1" type="primary">queA</name>
    <name type="ordered locus">KPK_4328</name>
</gene>
<accession>B5Y0Y7</accession>
<comment type="function">
    <text evidence="1">Transfers and isomerizes the ribose moiety from AdoMet to the 7-aminomethyl group of 7-deazaguanine (preQ1-tRNA) to give epoxyqueuosine (oQ-tRNA).</text>
</comment>
<comment type="catalytic activity">
    <reaction evidence="1">
        <text>7-aminomethyl-7-carbaguanosine(34) in tRNA + S-adenosyl-L-methionine = epoxyqueuosine(34) in tRNA + adenine + L-methionine + 2 H(+)</text>
        <dbReference type="Rhea" id="RHEA:32155"/>
        <dbReference type="Rhea" id="RHEA-COMP:10342"/>
        <dbReference type="Rhea" id="RHEA-COMP:18582"/>
        <dbReference type="ChEBI" id="CHEBI:15378"/>
        <dbReference type="ChEBI" id="CHEBI:16708"/>
        <dbReference type="ChEBI" id="CHEBI:57844"/>
        <dbReference type="ChEBI" id="CHEBI:59789"/>
        <dbReference type="ChEBI" id="CHEBI:82833"/>
        <dbReference type="ChEBI" id="CHEBI:194443"/>
        <dbReference type="EC" id="2.4.99.17"/>
    </reaction>
</comment>
<comment type="pathway">
    <text evidence="1">tRNA modification; tRNA-queuosine biosynthesis.</text>
</comment>
<comment type="subunit">
    <text evidence="1">Monomer.</text>
</comment>
<comment type="subcellular location">
    <subcellularLocation>
        <location evidence="1">Cytoplasm</location>
    </subcellularLocation>
</comment>
<comment type="similarity">
    <text evidence="1">Belongs to the QueA family.</text>
</comment>
<keyword id="KW-0963">Cytoplasm</keyword>
<keyword id="KW-0671">Queuosine biosynthesis</keyword>
<keyword id="KW-0949">S-adenosyl-L-methionine</keyword>
<keyword id="KW-0808">Transferase</keyword>
<organism>
    <name type="scientific">Klebsiella pneumoniae (strain 342)</name>
    <dbReference type="NCBI Taxonomy" id="507522"/>
    <lineage>
        <taxon>Bacteria</taxon>
        <taxon>Pseudomonadati</taxon>
        <taxon>Pseudomonadota</taxon>
        <taxon>Gammaproteobacteria</taxon>
        <taxon>Enterobacterales</taxon>
        <taxon>Enterobacteriaceae</taxon>
        <taxon>Klebsiella/Raoultella group</taxon>
        <taxon>Klebsiella</taxon>
        <taxon>Klebsiella pneumoniae complex</taxon>
    </lineage>
</organism>
<protein>
    <recommendedName>
        <fullName evidence="1">S-adenosylmethionine:tRNA ribosyltransferase-isomerase</fullName>
        <ecNumber evidence="1">2.4.99.17</ecNumber>
    </recommendedName>
    <alternativeName>
        <fullName evidence="1">Queuosine biosynthesis protein QueA</fullName>
    </alternativeName>
</protein>
<proteinExistence type="inferred from homology"/>
<dbReference type="EC" id="2.4.99.17" evidence="1"/>
<dbReference type="EMBL" id="CP000964">
    <property type="protein sequence ID" value="ACI08618.1"/>
    <property type="molecule type" value="Genomic_DNA"/>
</dbReference>
<dbReference type="SMR" id="B5Y0Y7"/>
<dbReference type="KEGG" id="kpe:KPK_4328"/>
<dbReference type="HOGENOM" id="CLU_039110_1_0_6"/>
<dbReference type="UniPathway" id="UPA00392"/>
<dbReference type="Proteomes" id="UP000001734">
    <property type="component" value="Chromosome"/>
</dbReference>
<dbReference type="GO" id="GO:0005737">
    <property type="term" value="C:cytoplasm"/>
    <property type="evidence" value="ECO:0007669"/>
    <property type="project" value="UniProtKB-SubCell"/>
</dbReference>
<dbReference type="GO" id="GO:0051075">
    <property type="term" value="F:S-adenosylmethionine:tRNA ribosyltransferase-isomerase activity"/>
    <property type="evidence" value="ECO:0007669"/>
    <property type="project" value="UniProtKB-EC"/>
</dbReference>
<dbReference type="GO" id="GO:0008616">
    <property type="term" value="P:queuosine biosynthetic process"/>
    <property type="evidence" value="ECO:0007669"/>
    <property type="project" value="UniProtKB-UniRule"/>
</dbReference>
<dbReference type="GO" id="GO:0002099">
    <property type="term" value="P:tRNA wobble guanine modification"/>
    <property type="evidence" value="ECO:0007669"/>
    <property type="project" value="TreeGrafter"/>
</dbReference>
<dbReference type="FunFam" id="2.40.10.240:FF:000001">
    <property type="entry name" value="S-adenosylmethionine:tRNA ribosyltransferase-isomerase"/>
    <property type="match status" value="1"/>
</dbReference>
<dbReference type="FunFam" id="3.40.1780.10:FF:000001">
    <property type="entry name" value="S-adenosylmethionine:tRNA ribosyltransferase-isomerase"/>
    <property type="match status" value="1"/>
</dbReference>
<dbReference type="Gene3D" id="2.40.10.240">
    <property type="entry name" value="QueA-like"/>
    <property type="match status" value="1"/>
</dbReference>
<dbReference type="Gene3D" id="3.40.1780.10">
    <property type="entry name" value="QueA-like"/>
    <property type="match status" value="1"/>
</dbReference>
<dbReference type="HAMAP" id="MF_00113">
    <property type="entry name" value="QueA"/>
    <property type="match status" value="1"/>
</dbReference>
<dbReference type="InterPro" id="IPR003699">
    <property type="entry name" value="QueA"/>
</dbReference>
<dbReference type="InterPro" id="IPR042118">
    <property type="entry name" value="QueA_dom1"/>
</dbReference>
<dbReference type="InterPro" id="IPR042119">
    <property type="entry name" value="QueA_dom2"/>
</dbReference>
<dbReference type="InterPro" id="IPR036100">
    <property type="entry name" value="QueA_sf"/>
</dbReference>
<dbReference type="NCBIfam" id="NF001140">
    <property type="entry name" value="PRK00147.1"/>
    <property type="match status" value="1"/>
</dbReference>
<dbReference type="NCBIfam" id="TIGR00113">
    <property type="entry name" value="queA"/>
    <property type="match status" value="1"/>
</dbReference>
<dbReference type="PANTHER" id="PTHR30307">
    <property type="entry name" value="S-ADENOSYLMETHIONINE:TRNA RIBOSYLTRANSFERASE-ISOMERASE"/>
    <property type="match status" value="1"/>
</dbReference>
<dbReference type="PANTHER" id="PTHR30307:SF0">
    <property type="entry name" value="S-ADENOSYLMETHIONINE:TRNA RIBOSYLTRANSFERASE-ISOMERASE"/>
    <property type="match status" value="1"/>
</dbReference>
<dbReference type="Pfam" id="PF02547">
    <property type="entry name" value="Queuosine_synth"/>
    <property type="match status" value="1"/>
</dbReference>
<dbReference type="SUPFAM" id="SSF111337">
    <property type="entry name" value="QueA-like"/>
    <property type="match status" value="1"/>
</dbReference>
<reference key="1">
    <citation type="journal article" date="2008" name="PLoS Genet.">
        <title>Complete genome sequence of the N2-fixing broad host range endophyte Klebsiella pneumoniae 342 and virulence predictions verified in mice.</title>
        <authorList>
            <person name="Fouts D.E."/>
            <person name="Tyler H.L."/>
            <person name="DeBoy R.T."/>
            <person name="Daugherty S."/>
            <person name="Ren Q."/>
            <person name="Badger J.H."/>
            <person name="Durkin A.S."/>
            <person name="Huot H."/>
            <person name="Shrivastava S."/>
            <person name="Kothari S."/>
            <person name="Dodson R.J."/>
            <person name="Mohamoud Y."/>
            <person name="Khouri H."/>
            <person name="Roesch L.F.W."/>
            <person name="Krogfelt K.A."/>
            <person name="Struve C."/>
            <person name="Triplett E.W."/>
            <person name="Methe B.A."/>
        </authorList>
    </citation>
    <scope>NUCLEOTIDE SEQUENCE [LARGE SCALE GENOMIC DNA]</scope>
    <source>
        <strain>342</strain>
    </source>
</reference>
<sequence length="354" mass="39134">MRVTDFAFELPESLIAHYPMPERSSCRLLSLDGPTGALTHGTFTDILDKLNPGDLLVFNNTRVIPARLFGRKASGGKIEVLVERMLDDKRILAHIRASKAPKPGAELLLGDDESIKATMLARHGALFEVEFNDERPVLEILNGIGHMPLPPYIDRPDEDADRELYQTVYGTRPGAVAAPTAGLHFDEPLLDKLRAKGVEMAFVTLHVGAGTFQPVRVDSIEEHTMHSEYAEVPQEVVDAVLAAKARGNRVIAVGTTSVRSLESAAQAAKDALIAPFFDDTQIFIYPGYQYQVIDALVTNFHLPESTLIMLVSAFAGYQHTMNAYKVAVEQKYRFFSYGDAMFITYNPQAISERP</sequence>
<evidence type="ECO:0000255" key="1">
    <source>
        <dbReference type="HAMAP-Rule" id="MF_00113"/>
    </source>
</evidence>
<feature type="chain" id="PRO_1000094786" description="S-adenosylmethionine:tRNA ribosyltransferase-isomerase">
    <location>
        <begin position="1"/>
        <end position="354"/>
    </location>
</feature>